<gene>
    <name evidence="1" type="primary">hslV</name>
    <name type="ordered locus">Sbal195_0463</name>
</gene>
<proteinExistence type="inferred from homology"/>
<dbReference type="EC" id="3.4.25.2" evidence="1"/>
<dbReference type="EMBL" id="CP000891">
    <property type="protein sequence ID" value="ABX47643.1"/>
    <property type="molecule type" value="Genomic_DNA"/>
</dbReference>
<dbReference type="RefSeq" id="WP_006083300.1">
    <property type="nucleotide sequence ID" value="NC_009997.1"/>
</dbReference>
<dbReference type="SMR" id="A9KYP9"/>
<dbReference type="MEROPS" id="T01.006"/>
<dbReference type="GeneID" id="11770798"/>
<dbReference type="KEGG" id="sbn:Sbal195_0463"/>
<dbReference type="HOGENOM" id="CLU_093872_1_0_6"/>
<dbReference type="Proteomes" id="UP000000770">
    <property type="component" value="Chromosome"/>
</dbReference>
<dbReference type="GO" id="GO:0009376">
    <property type="term" value="C:HslUV protease complex"/>
    <property type="evidence" value="ECO:0007669"/>
    <property type="project" value="UniProtKB-UniRule"/>
</dbReference>
<dbReference type="GO" id="GO:0005839">
    <property type="term" value="C:proteasome core complex"/>
    <property type="evidence" value="ECO:0007669"/>
    <property type="project" value="InterPro"/>
</dbReference>
<dbReference type="GO" id="GO:0046872">
    <property type="term" value="F:metal ion binding"/>
    <property type="evidence" value="ECO:0007669"/>
    <property type="project" value="UniProtKB-KW"/>
</dbReference>
<dbReference type="GO" id="GO:0004298">
    <property type="term" value="F:threonine-type endopeptidase activity"/>
    <property type="evidence" value="ECO:0007669"/>
    <property type="project" value="UniProtKB-KW"/>
</dbReference>
<dbReference type="GO" id="GO:0051603">
    <property type="term" value="P:proteolysis involved in protein catabolic process"/>
    <property type="evidence" value="ECO:0007669"/>
    <property type="project" value="InterPro"/>
</dbReference>
<dbReference type="CDD" id="cd01913">
    <property type="entry name" value="protease_HslV"/>
    <property type="match status" value="1"/>
</dbReference>
<dbReference type="FunFam" id="3.60.20.10:FF:000002">
    <property type="entry name" value="ATP-dependent protease subunit HslV"/>
    <property type="match status" value="1"/>
</dbReference>
<dbReference type="Gene3D" id="3.60.20.10">
    <property type="entry name" value="Glutamine Phosphoribosylpyrophosphate, subunit 1, domain 1"/>
    <property type="match status" value="1"/>
</dbReference>
<dbReference type="HAMAP" id="MF_00248">
    <property type="entry name" value="HslV"/>
    <property type="match status" value="1"/>
</dbReference>
<dbReference type="InterPro" id="IPR022281">
    <property type="entry name" value="ATP-dep_Prtase_HsIV_su"/>
</dbReference>
<dbReference type="InterPro" id="IPR029055">
    <property type="entry name" value="Ntn_hydrolases_N"/>
</dbReference>
<dbReference type="InterPro" id="IPR001353">
    <property type="entry name" value="Proteasome_sua/b"/>
</dbReference>
<dbReference type="InterPro" id="IPR023333">
    <property type="entry name" value="Proteasome_suB-type"/>
</dbReference>
<dbReference type="NCBIfam" id="TIGR03692">
    <property type="entry name" value="ATP_dep_HslV"/>
    <property type="match status" value="1"/>
</dbReference>
<dbReference type="NCBIfam" id="NF003964">
    <property type="entry name" value="PRK05456.1"/>
    <property type="match status" value="1"/>
</dbReference>
<dbReference type="PANTHER" id="PTHR32194:SF0">
    <property type="entry name" value="ATP-DEPENDENT PROTEASE SUBUNIT HSLV"/>
    <property type="match status" value="1"/>
</dbReference>
<dbReference type="PANTHER" id="PTHR32194">
    <property type="entry name" value="METALLOPROTEASE TLDD"/>
    <property type="match status" value="1"/>
</dbReference>
<dbReference type="Pfam" id="PF00227">
    <property type="entry name" value="Proteasome"/>
    <property type="match status" value="1"/>
</dbReference>
<dbReference type="PIRSF" id="PIRSF039093">
    <property type="entry name" value="HslV"/>
    <property type="match status" value="1"/>
</dbReference>
<dbReference type="SUPFAM" id="SSF56235">
    <property type="entry name" value="N-terminal nucleophile aminohydrolases (Ntn hydrolases)"/>
    <property type="match status" value="1"/>
</dbReference>
<dbReference type="PROSITE" id="PS51476">
    <property type="entry name" value="PROTEASOME_BETA_2"/>
    <property type="match status" value="1"/>
</dbReference>
<keyword id="KW-0021">Allosteric enzyme</keyword>
<keyword id="KW-0963">Cytoplasm</keyword>
<keyword id="KW-0378">Hydrolase</keyword>
<keyword id="KW-0479">Metal-binding</keyword>
<keyword id="KW-0645">Protease</keyword>
<keyword id="KW-0915">Sodium</keyword>
<keyword id="KW-0888">Threonine protease</keyword>
<protein>
    <recommendedName>
        <fullName evidence="1">ATP-dependent protease subunit HslV</fullName>
        <ecNumber evidence="1">3.4.25.2</ecNumber>
    </recommendedName>
</protein>
<sequence length="174" mass="18928">MTTIVSVRRNNQVVIAGDGQVSLGNTVMKGNAKKVRRLYHNKVLAGFAGGTADAFTLFERFEAKLEMHQGHLLRSAVELAKDWRTDRMLRKLEALLVVADAETSLIITGNGDVVQPEHDLVAIGSGGNYAQAAALALLQNTELSALEIAEKSLTIAADICVFTNQFKTIEELNY</sequence>
<evidence type="ECO:0000255" key="1">
    <source>
        <dbReference type="HAMAP-Rule" id="MF_00248"/>
    </source>
</evidence>
<comment type="function">
    <text evidence="1">Protease subunit of a proteasome-like degradation complex believed to be a general protein degrading machinery.</text>
</comment>
<comment type="catalytic activity">
    <reaction evidence="1">
        <text>ATP-dependent cleavage of peptide bonds with broad specificity.</text>
        <dbReference type="EC" id="3.4.25.2"/>
    </reaction>
</comment>
<comment type="activity regulation">
    <text evidence="1">Allosterically activated by HslU binding.</text>
</comment>
<comment type="subunit">
    <text evidence="1">A double ring-shaped homohexamer of HslV is capped on each side by a ring-shaped HslU homohexamer. The assembly of the HslU/HslV complex is dependent on binding of ATP.</text>
</comment>
<comment type="subcellular location">
    <subcellularLocation>
        <location evidence="1">Cytoplasm</location>
    </subcellularLocation>
</comment>
<comment type="similarity">
    <text evidence="1">Belongs to the peptidase T1B family. HslV subfamily.</text>
</comment>
<accession>A9KYP9</accession>
<organism>
    <name type="scientific">Shewanella baltica (strain OS195)</name>
    <dbReference type="NCBI Taxonomy" id="399599"/>
    <lineage>
        <taxon>Bacteria</taxon>
        <taxon>Pseudomonadati</taxon>
        <taxon>Pseudomonadota</taxon>
        <taxon>Gammaproteobacteria</taxon>
        <taxon>Alteromonadales</taxon>
        <taxon>Shewanellaceae</taxon>
        <taxon>Shewanella</taxon>
    </lineage>
</organism>
<feature type="chain" id="PRO_1000078428" description="ATP-dependent protease subunit HslV">
    <location>
        <begin position="1"/>
        <end position="174"/>
    </location>
</feature>
<feature type="active site" evidence="1">
    <location>
        <position position="2"/>
    </location>
</feature>
<feature type="binding site" evidence="1">
    <location>
        <position position="157"/>
    </location>
    <ligand>
        <name>Na(+)</name>
        <dbReference type="ChEBI" id="CHEBI:29101"/>
    </ligand>
</feature>
<feature type="binding site" evidence="1">
    <location>
        <position position="160"/>
    </location>
    <ligand>
        <name>Na(+)</name>
        <dbReference type="ChEBI" id="CHEBI:29101"/>
    </ligand>
</feature>
<feature type="binding site" evidence="1">
    <location>
        <position position="163"/>
    </location>
    <ligand>
        <name>Na(+)</name>
        <dbReference type="ChEBI" id="CHEBI:29101"/>
    </ligand>
</feature>
<reference key="1">
    <citation type="submission" date="2007-11" db="EMBL/GenBank/DDBJ databases">
        <title>Complete sequence of chromosome of Shewanella baltica OS195.</title>
        <authorList>
            <consortium name="US DOE Joint Genome Institute"/>
            <person name="Copeland A."/>
            <person name="Lucas S."/>
            <person name="Lapidus A."/>
            <person name="Barry K."/>
            <person name="Glavina del Rio T."/>
            <person name="Dalin E."/>
            <person name="Tice H."/>
            <person name="Pitluck S."/>
            <person name="Chain P."/>
            <person name="Malfatti S."/>
            <person name="Shin M."/>
            <person name="Vergez L."/>
            <person name="Schmutz J."/>
            <person name="Larimer F."/>
            <person name="Land M."/>
            <person name="Hauser L."/>
            <person name="Kyrpides N."/>
            <person name="Kim E."/>
            <person name="Brettar I."/>
            <person name="Rodrigues J."/>
            <person name="Konstantinidis K."/>
            <person name="Klappenbach J."/>
            <person name="Hofle M."/>
            <person name="Tiedje J."/>
            <person name="Richardson P."/>
        </authorList>
    </citation>
    <scope>NUCLEOTIDE SEQUENCE [LARGE SCALE GENOMIC DNA]</scope>
    <source>
        <strain>OS195</strain>
    </source>
</reference>
<name>HSLV_SHEB9</name>